<organism>
    <name type="scientific">Pseudoalteromonas translucida (strain TAC 125)</name>
    <dbReference type="NCBI Taxonomy" id="326442"/>
    <lineage>
        <taxon>Bacteria</taxon>
        <taxon>Pseudomonadati</taxon>
        <taxon>Pseudomonadota</taxon>
        <taxon>Gammaproteobacteria</taxon>
        <taxon>Alteromonadales</taxon>
        <taxon>Pseudoalteromonadaceae</taxon>
        <taxon>Pseudoalteromonas</taxon>
    </lineage>
</organism>
<feature type="chain" id="PRO_1000070490" description="Enoyl-[acyl-carrier-protein] reductase [NADH]">
    <location>
        <begin position="1"/>
        <end position="397"/>
    </location>
</feature>
<feature type="active site" description="Proton donor" evidence="1">
    <location>
        <position position="235"/>
    </location>
</feature>
<feature type="binding site" evidence="1">
    <location>
        <begin position="48"/>
        <end position="53"/>
    </location>
    <ligand>
        <name>NAD(+)</name>
        <dbReference type="ChEBI" id="CHEBI:57540"/>
    </ligand>
</feature>
<feature type="binding site" evidence="1">
    <location>
        <begin position="74"/>
        <end position="75"/>
    </location>
    <ligand>
        <name>NAD(+)</name>
        <dbReference type="ChEBI" id="CHEBI:57540"/>
    </ligand>
</feature>
<feature type="binding site" evidence="1">
    <location>
        <begin position="111"/>
        <end position="112"/>
    </location>
    <ligand>
        <name>NAD(+)</name>
        <dbReference type="ChEBI" id="CHEBI:57540"/>
    </ligand>
</feature>
<feature type="binding site" evidence="1">
    <location>
        <begin position="139"/>
        <end position="140"/>
    </location>
    <ligand>
        <name>NAD(+)</name>
        <dbReference type="ChEBI" id="CHEBI:57540"/>
    </ligand>
</feature>
<feature type="binding site" evidence="1">
    <location>
        <position position="225"/>
    </location>
    <ligand>
        <name>substrate</name>
    </ligand>
</feature>
<feature type="binding site" evidence="1">
    <location>
        <position position="244"/>
    </location>
    <ligand>
        <name>NAD(+)</name>
        <dbReference type="ChEBI" id="CHEBI:57540"/>
    </ligand>
</feature>
<feature type="binding site" evidence="1">
    <location>
        <begin position="273"/>
        <end position="275"/>
    </location>
    <ligand>
        <name>NAD(+)</name>
        <dbReference type="ChEBI" id="CHEBI:57540"/>
    </ligand>
</feature>
<feature type="site" description="Plays an important role in discriminating NADH against NADPH" evidence="1">
    <location>
        <position position="75"/>
    </location>
</feature>
<comment type="function">
    <text evidence="1">Involved in the final reduction of the elongation cycle of fatty acid synthesis (FAS II). Catalyzes the reduction of a carbon-carbon double bond in an enoyl moiety that is covalently linked to an acyl carrier protein (ACP).</text>
</comment>
<comment type="catalytic activity">
    <reaction evidence="1">
        <text>a 2,3-saturated acyl-[ACP] + NAD(+) = a (2E)-enoyl-[ACP] + NADH + H(+)</text>
        <dbReference type="Rhea" id="RHEA:10240"/>
        <dbReference type="Rhea" id="RHEA-COMP:9925"/>
        <dbReference type="Rhea" id="RHEA-COMP:9926"/>
        <dbReference type="ChEBI" id="CHEBI:15378"/>
        <dbReference type="ChEBI" id="CHEBI:57540"/>
        <dbReference type="ChEBI" id="CHEBI:57945"/>
        <dbReference type="ChEBI" id="CHEBI:78784"/>
        <dbReference type="ChEBI" id="CHEBI:78785"/>
        <dbReference type="EC" id="1.3.1.9"/>
    </reaction>
</comment>
<comment type="pathway">
    <text evidence="1">Lipid metabolism; fatty acid biosynthesis.</text>
</comment>
<comment type="subunit">
    <text evidence="1">Monomer.</text>
</comment>
<comment type="similarity">
    <text evidence="1">Belongs to the TER reductase family.</text>
</comment>
<gene>
    <name evidence="1" type="primary">fabV</name>
    <name type="ordered locus">PSHAa2242</name>
</gene>
<keyword id="KW-0275">Fatty acid biosynthesis</keyword>
<keyword id="KW-0276">Fatty acid metabolism</keyword>
<keyword id="KW-0444">Lipid biosynthesis</keyword>
<keyword id="KW-0443">Lipid metabolism</keyword>
<keyword id="KW-0520">NAD</keyword>
<keyword id="KW-0560">Oxidoreductase</keyword>
<keyword id="KW-1185">Reference proteome</keyword>
<protein>
    <recommendedName>
        <fullName evidence="1">Enoyl-[acyl-carrier-protein] reductase [NADH]</fullName>
        <shortName evidence="1">ENR</shortName>
        <ecNumber evidence="1">1.3.1.9</ecNumber>
    </recommendedName>
</protein>
<sequence length="397" mass="43484">MVIKPKIRGFICTNAHPVGCSEHVQEQINYVKQQGALKNAPKNVLVIGASTGYGLASRITAAFGGGAKTLGIFFEKEGTERKTGSAGWYNTAAFQNAADEAGLWSKNINGDAFSNEIKQKAIDTIKADLGKVDLIIYSLASPRRTDPNTGEVFSSTLKPIGNAVTTKNLNTSKREIDEITVEAANQDDIDNTIKVMGGEDWEMWIDALKQADVLADNFKTTAYTYIGKELTWPIYGHATIGKAKEDLDRATAAIKASTSDLNGEAYVSSLNAVVTQASSAIPIMPLYISALFKVMKADGTYEGTIEQIQALFSENLYGDTPRFDEGGHLFQNYKELEDDVQVRIQAIWDKVDTSSIDELTDYVGYHNEFLRLFGFGIQGVDYEQEVDPVQPIANMID</sequence>
<evidence type="ECO:0000255" key="1">
    <source>
        <dbReference type="HAMAP-Rule" id="MF_01838"/>
    </source>
</evidence>
<proteinExistence type="inferred from homology"/>
<accession>Q3IHQ9</accession>
<reference key="1">
    <citation type="journal article" date="2005" name="Genome Res.">
        <title>Coping with cold: the genome of the versatile marine Antarctica bacterium Pseudoalteromonas haloplanktis TAC125.</title>
        <authorList>
            <person name="Medigue C."/>
            <person name="Krin E."/>
            <person name="Pascal G."/>
            <person name="Barbe V."/>
            <person name="Bernsel A."/>
            <person name="Bertin P.N."/>
            <person name="Cheung F."/>
            <person name="Cruveiller S."/>
            <person name="D'Amico S."/>
            <person name="Duilio A."/>
            <person name="Fang G."/>
            <person name="Feller G."/>
            <person name="Ho C."/>
            <person name="Mangenot S."/>
            <person name="Marino G."/>
            <person name="Nilsson J."/>
            <person name="Parrilli E."/>
            <person name="Rocha E.P.C."/>
            <person name="Rouy Z."/>
            <person name="Sekowska A."/>
            <person name="Tutino M.L."/>
            <person name="Vallenet D."/>
            <person name="von Heijne G."/>
            <person name="Danchin A."/>
        </authorList>
    </citation>
    <scope>NUCLEOTIDE SEQUENCE [LARGE SCALE GENOMIC DNA]</scope>
    <source>
        <strain>TAC 125</strain>
    </source>
</reference>
<dbReference type="EC" id="1.3.1.9" evidence="1"/>
<dbReference type="EMBL" id="CR954246">
    <property type="protein sequence ID" value="CAI87298.1"/>
    <property type="molecule type" value="Genomic_DNA"/>
</dbReference>
<dbReference type="SMR" id="Q3IHQ9"/>
<dbReference type="STRING" id="326442.PSHAa2242"/>
<dbReference type="KEGG" id="pha:PSHAa2242"/>
<dbReference type="PATRIC" id="fig|326442.8.peg.2163"/>
<dbReference type="eggNOG" id="COG3007">
    <property type="taxonomic scope" value="Bacteria"/>
</dbReference>
<dbReference type="HOGENOM" id="CLU_057698_1_0_6"/>
<dbReference type="BioCyc" id="PHAL326442:PSHA_RS11060-MONOMER"/>
<dbReference type="UniPathway" id="UPA00094"/>
<dbReference type="Proteomes" id="UP000006843">
    <property type="component" value="Chromosome I"/>
</dbReference>
<dbReference type="GO" id="GO:0004318">
    <property type="term" value="F:enoyl-[acyl-carrier-protein] reductase (NADH) activity"/>
    <property type="evidence" value="ECO:0007669"/>
    <property type="project" value="UniProtKB-UniRule"/>
</dbReference>
<dbReference type="GO" id="GO:0051287">
    <property type="term" value="F:NAD binding"/>
    <property type="evidence" value="ECO:0007669"/>
    <property type="project" value="UniProtKB-UniRule"/>
</dbReference>
<dbReference type="GO" id="GO:0050343">
    <property type="term" value="F:trans-2-enoyl-CoA reductase (NADH) activity"/>
    <property type="evidence" value="ECO:0007669"/>
    <property type="project" value="TreeGrafter"/>
</dbReference>
<dbReference type="GO" id="GO:0006633">
    <property type="term" value="P:fatty acid biosynthetic process"/>
    <property type="evidence" value="ECO:0007669"/>
    <property type="project" value="UniProtKB-UniRule"/>
</dbReference>
<dbReference type="FunFam" id="3.40.50.720:FF:000221">
    <property type="entry name" value="Enoyl-[acyl-carrier-protein] reductase [NADH]"/>
    <property type="match status" value="1"/>
</dbReference>
<dbReference type="Gene3D" id="3.40.50.720">
    <property type="entry name" value="NAD(P)-binding Rossmann-like Domain"/>
    <property type="match status" value="1"/>
</dbReference>
<dbReference type="HAMAP" id="MF_01838">
    <property type="entry name" value="FabV_reductase"/>
    <property type="match status" value="1"/>
</dbReference>
<dbReference type="InterPro" id="IPR024906">
    <property type="entry name" value="Eno_Rdtase_FAD-bd_dom"/>
</dbReference>
<dbReference type="InterPro" id="IPR024910">
    <property type="entry name" value="Enoyl-CoA_Rdtase_cat_dom"/>
</dbReference>
<dbReference type="InterPro" id="IPR050048">
    <property type="entry name" value="FabV-like_NADH_b"/>
</dbReference>
<dbReference type="InterPro" id="IPR010758">
    <property type="entry name" value="Trans-2-enoyl-CoA_reductase"/>
</dbReference>
<dbReference type="NCBIfam" id="NF043048">
    <property type="entry name" value="EnoyACPredFabV"/>
    <property type="match status" value="1"/>
</dbReference>
<dbReference type="NCBIfam" id="NF010177">
    <property type="entry name" value="PRK13656.1"/>
    <property type="match status" value="1"/>
</dbReference>
<dbReference type="PANTHER" id="PTHR37480">
    <property type="entry name" value="ENOYL-[ACYL-CARRIER-PROTEIN] REDUCTASE [NADH]"/>
    <property type="match status" value="1"/>
</dbReference>
<dbReference type="PANTHER" id="PTHR37480:SF1">
    <property type="entry name" value="ENOYL-[ACYL-CARRIER-PROTEIN] REDUCTASE [NADH]"/>
    <property type="match status" value="1"/>
</dbReference>
<dbReference type="Pfam" id="PF07055">
    <property type="entry name" value="Eno-Rase_FAD_bd"/>
    <property type="match status" value="1"/>
</dbReference>
<dbReference type="Pfam" id="PF12242">
    <property type="entry name" value="Eno-Rase_NADH_b"/>
    <property type="match status" value="1"/>
</dbReference>
<dbReference type="Pfam" id="PF12241">
    <property type="entry name" value="Enoyl_reductase"/>
    <property type="match status" value="1"/>
</dbReference>
<name>FABV_PSET1</name>